<reference key="1">
    <citation type="journal article" date="2011" name="PLoS Genet.">
        <title>Whole-genome comparison reveals novel genetic elements that characterize the genome of industrial strains of Saccharomyces cerevisiae.</title>
        <authorList>
            <person name="Borneman A.R."/>
            <person name="Desany B.A."/>
            <person name="Riches D."/>
            <person name="Affourtit J.P."/>
            <person name="Forgan A.H."/>
            <person name="Pretorius I.S."/>
            <person name="Egholm M."/>
            <person name="Chambers P.J."/>
        </authorList>
    </citation>
    <scope>NUCLEOTIDE SEQUENCE [LARGE SCALE GENOMIC DNA]</scope>
    <source>
        <strain>Lalvin QA23</strain>
    </source>
</reference>
<feature type="chain" id="PRO_0000410767" description="Topoisomerase I damage affected protein 11">
    <location>
        <begin position="1"/>
        <end position="475"/>
    </location>
</feature>
<feature type="region of interest" description="Disordered" evidence="4">
    <location>
        <begin position="32"/>
        <end position="62"/>
    </location>
</feature>
<feature type="region of interest" description="Disordered" evidence="4">
    <location>
        <begin position="252"/>
        <end position="306"/>
    </location>
</feature>
<feature type="region of interest" description="Disordered" evidence="4">
    <location>
        <begin position="332"/>
        <end position="377"/>
    </location>
</feature>
<feature type="region of interest" description="Disordered" evidence="4">
    <location>
        <begin position="400"/>
        <end position="475"/>
    </location>
</feature>
<feature type="coiled-coil region" evidence="3">
    <location>
        <begin position="179"/>
        <end position="231"/>
    </location>
</feature>
<feature type="compositionally biased region" description="Polar residues" evidence="4">
    <location>
        <begin position="257"/>
        <end position="287"/>
    </location>
</feature>
<feature type="compositionally biased region" description="Basic and acidic residues" evidence="4">
    <location>
        <begin position="290"/>
        <end position="301"/>
    </location>
</feature>
<feature type="compositionally biased region" description="Polar residues" evidence="4">
    <location>
        <begin position="332"/>
        <end position="359"/>
    </location>
</feature>
<feature type="compositionally biased region" description="Polar residues" evidence="4">
    <location>
        <begin position="368"/>
        <end position="377"/>
    </location>
</feature>
<feature type="compositionally biased region" description="Basic and acidic residues" evidence="4">
    <location>
        <begin position="403"/>
        <end position="421"/>
    </location>
</feature>
<feature type="modified residue" description="Phosphothreonine" evidence="2">
    <location>
        <position position="236"/>
    </location>
</feature>
<feature type="modified residue" description="Phosphoserine" evidence="2">
    <location>
        <position position="244"/>
    </location>
</feature>
<feature type="modified residue" description="Phosphoserine" evidence="2">
    <location>
        <position position="286"/>
    </location>
</feature>
<protein>
    <recommendedName>
        <fullName>Topoisomerase I damage affected protein 11</fullName>
    </recommendedName>
</protein>
<name>TDA11_YEASL</name>
<organism>
    <name type="scientific">Saccharomyces cerevisiae (strain Lalvin QA23)</name>
    <name type="common">Baker's yeast</name>
    <dbReference type="NCBI Taxonomy" id="764098"/>
    <lineage>
        <taxon>Eukaryota</taxon>
        <taxon>Fungi</taxon>
        <taxon>Dikarya</taxon>
        <taxon>Ascomycota</taxon>
        <taxon>Saccharomycotina</taxon>
        <taxon>Saccharomycetes</taxon>
        <taxon>Saccharomycetales</taxon>
        <taxon>Saccharomycetaceae</taxon>
        <taxon>Saccharomyces</taxon>
    </lineage>
</organism>
<accession>E7KPK0</accession>
<gene>
    <name type="primary">TDA11</name>
    <name type="ORF">QA23_2213</name>
</gene>
<comment type="subcellular location">
    <subcellularLocation>
        <location evidence="1">Cytoplasm</location>
    </subcellularLocation>
</comment>
<comment type="similarity">
    <text evidence="5">Belongs to the TDA11 family.</text>
</comment>
<dbReference type="EMBL" id="ADVV01000041">
    <property type="protein sequence ID" value="EGA82562.1"/>
    <property type="molecule type" value="Genomic_DNA"/>
</dbReference>
<dbReference type="SMR" id="E7KPK0"/>
<dbReference type="HOGENOM" id="CLU_046807_0_0_1"/>
<dbReference type="OrthoDB" id="7991at4893"/>
<dbReference type="GO" id="GO:0005737">
    <property type="term" value="C:cytoplasm"/>
    <property type="evidence" value="ECO:0007669"/>
    <property type="project" value="UniProtKB-SubCell"/>
</dbReference>
<dbReference type="InterPro" id="IPR031388">
    <property type="entry name" value="Tda11"/>
</dbReference>
<dbReference type="Pfam" id="PF17084">
    <property type="entry name" value="TDA11"/>
    <property type="match status" value="1"/>
</dbReference>
<sequence>MNKFDEFIESNEKDLDVDTSTRNSIISMSPVRKTGRKIRSASSNGYRLEHHRTSSAGSMHSQRLMTPTRLNDQDHPLQAKPDARRVVTRHSSVSVPNAMSKRRSLIQPMVVPTTPESQNNLPSVSHSEGSYGIPLESTTVLSSEQAMASGLRRSRNGSSQSVNSMIATTIPTNGVDVSALLQSLATKELELLECKQKIEDLKKQTQHEEQNYTRRARELHELKEQVSKHLDPSLNTPVKNRAFSPVYQNIPLESRTENAGNSSLPSSVSKPKNMGHQSTNQSRSVSPQDIQERRQRDDSSDSSKQSLWSKPLALFNQFDKIIQHEIERTLNWDDSLSGTPEVQEGTPTSNSESSAQQYDNEAPGARQKSPSQGSVSRSLWSFVSDVKAGLLGIEEENDNDVITDNRCDPVYKSDRQHEQKKSTHKITNRGQAEDSGDDSSLNTRKFKTTTKFQKDNAGNNSLTDESGHRTREKKK</sequence>
<proteinExistence type="inferred from homology"/>
<keyword id="KW-0175">Coiled coil</keyword>
<keyword id="KW-0963">Cytoplasm</keyword>
<keyword id="KW-0597">Phosphoprotein</keyword>
<evidence type="ECO:0000250" key="1"/>
<evidence type="ECO:0000250" key="2">
    <source>
        <dbReference type="UniProtKB" id="P38854"/>
    </source>
</evidence>
<evidence type="ECO:0000255" key="3"/>
<evidence type="ECO:0000256" key="4">
    <source>
        <dbReference type="SAM" id="MobiDB-lite"/>
    </source>
</evidence>
<evidence type="ECO:0000305" key="5"/>